<organism>
    <name type="scientific">Escherichia coli O17:K52:H18 (strain UMN026 / ExPEC)</name>
    <dbReference type="NCBI Taxonomy" id="585056"/>
    <lineage>
        <taxon>Bacteria</taxon>
        <taxon>Pseudomonadati</taxon>
        <taxon>Pseudomonadota</taxon>
        <taxon>Gammaproteobacteria</taxon>
        <taxon>Enterobacterales</taxon>
        <taxon>Enterobacteriaceae</taxon>
        <taxon>Escherichia</taxon>
    </lineage>
</organism>
<keyword id="KW-0963">Cytoplasm</keyword>
<keyword id="KW-0227">DNA damage</keyword>
<keyword id="KW-0234">DNA repair</keyword>
<keyword id="KW-0255">Endonuclease</keyword>
<keyword id="KW-0378">Hydrolase</keyword>
<keyword id="KW-0460">Magnesium</keyword>
<keyword id="KW-0479">Metal-binding</keyword>
<keyword id="KW-0540">Nuclease</keyword>
<proteinExistence type="inferred from homology"/>
<comment type="function">
    <text evidence="1">DNA repair enzyme involved in the repair of deaminated bases. Selectively cleaves double-stranded DNA at the second phosphodiester bond 3' to a deoxyinosine leaving behind the intact lesion on the nicked DNA.</text>
</comment>
<comment type="catalytic activity">
    <reaction evidence="1">
        <text>Endonucleolytic cleavage at apurinic or apyrimidinic sites to products with a 5'-phosphate.</text>
        <dbReference type="EC" id="3.1.21.7"/>
    </reaction>
</comment>
<comment type="cofactor">
    <cofactor evidence="1">
        <name>Mg(2+)</name>
        <dbReference type="ChEBI" id="CHEBI:18420"/>
    </cofactor>
</comment>
<comment type="subcellular location">
    <subcellularLocation>
        <location evidence="1">Cytoplasm</location>
    </subcellularLocation>
</comment>
<comment type="similarity">
    <text evidence="1">Belongs to the endonuclease V family.</text>
</comment>
<sequence length="223" mass="24673">MDLASLRAQQIELASSVIREDRLDKDPPDLIAGADVGFEQGGEVTRAAMVLLKYPSLELVEYKVARIATTMPYIPGFLSFREYPALLAAWEMLSQKPDLVFVDGHGISHPRRLGVASHFGLLVDVPTIGVAKKRLCGKFEPLSSEPGALAPLMDKGEQLAWVWRSKARCNPLFIATGHRVSVDSALAWVQRCMKGYRLPEPTRWADAVASERPAFVRYTANQP</sequence>
<accession>B7NFT9</accession>
<name>NFI_ECOLU</name>
<gene>
    <name evidence="1" type="primary">nfi</name>
    <name type="ordered locus">ECUMN_4522</name>
</gene>
<reference key="1">
    <citation type="journal article" date="2009" name="PLoS Genet.">
        <title>Organised genome dynamics in the Escherichia coli species results in highly diverse adaptive paths.</title>
        <authorList>
            <person name="Touchon M."/>
            <person name="Hoede C."/>
            <person name="Tenaillon O."/>
            <person name="Barbe V."/>
            <person name="Baeriswyl S."/>
            <person name="Bidet P."/>
            <person name="Bingen E."/>
            <person name="Bonacorsi S."/>
            <person name="Bouchier C."/>
            <person name="Bouvet O."/>
            <person name="Calteau A."/>
            <person name="Chiapello H."/>
            <person name="Clermont O."/>
            <person name="Cruveiller S."/>
            <person name="Danchin A."/>
            <person name="Diard M."/>
            <person name="Dossat C."/>
            <person name="Karoui M.E."/>
            <person name="Frapy E."/>
            <person name="Garry L."/>
            <person name="Ghigo J.M."/>
            <person name="Gilles A.M."/>
            <person name="Johnson J."/>
            <person name="Le Bouguenec C."/>
            <person name="Lescat M."/>
            <person name="Mangenot S."/>
            <person name="Martinez-Jehanne V."/>
            <person name="Matic I."/>
            <person name="Nassif X."/>
            <person name="Oztas S."/>
            <person name="Petit M.A."/>
            <person name="Pichon C."/>
            <person name="Rouy Z."/>
            <person name="Ruf C.S."/>
            <person name="Schneider D."/>
            <person name="Tourret J."/>
            <person name="Vacherie B."/>
            <person name="Vallenet D."/>
            <person name="Medigue C."/>
            <person name="Rocha E.P.C."/>
            <person name="Denamur E."/>
        </authorList>
    </citation>
    <scope>NUCLEOTIDE SEQUENCE [LARGE SCALE GENOMIC DNA]</scope>
    <source>
        <strain>UMN026 / ExPEC</strain>
    </source>
</reference>
<feature type="chain" id="PRO_1000133875" description="Endonuclease V">
    <location>
        <begin position="1"/>
        <end position="223"/>
    </location>
</feature>
<feature type="binding site" evidence="1">
    <location>
        <position position="35"/>
    </location>
    <ligand>
        <name>Mg(2+)</name>
        <dbReference type="ChEBI" id="CHEBI:18420"/>
    </ligand>
</feature>
<feature type="binding site" evidence="1">
    <location>
        <position position="103"/>
    </location>
    <ligand>
        <name>Mg(2+)</name>
        <dbReference type="ChEBI" id="CHEBI:18420"/>
    </ligand>
</feature>
<feature type="site" description="Interaction with target DNA" evidence="1">
    <location>
        <position position="73"/>
    </location>
</feature>
<protein>
    <recommendedName>
        <fullName evidence="1">Endonuclease V</fullName>
        <ecNumber evidence="1">3.1.21.7</ecNumber>
    </recommendedName>
    <alternativeName>
        <fullName evidence="1">Deoxyinosine 3'endonuclease</fullName>
    </alternativeName>
    <alternativeName>
        <fullName evidence="1">Deoxyribonuclease V</fullName>
        <shortName evidence="1">DNase V</shortName>
    </alternativeName>
</protein>
<evidence type="ECO:0000255" key="1">
    <source>
        <dbReference type="HAMAP-Rule" id="MF_00801"/>
    </source>
</evidence>
<dbReference type="EC" id="3.1.21.7" evidence="1"/>
<dbReference type="EMBL" id="CU928163">
    <property type="protein sequence ID" value="CAR15646.1"/>
    <property type="molecule type" value="Genomic_DNA"/>
</dbReference>
<dbReference type="RefSeq" id="WP_000362388.1">
    <property type="nucleotide sequence ID" value="NC_011751.1"/>
</dbReference>
<dbReference type="RefSeq" id="YP_002415136.1">
    <property type="nucleotide sequence ID" value="NC_011751.1"/>
</dbReference>
<dbReference type="SMR" id="B7NFT9"/>
<dbReference type="STRING" id="585056.ECUMN_4522"/>
<dbReference type="GeneID" id="75169444"/>
<dbReference type="KEGG" id="eum:ECUMN_4522"/>
<dbReference type="PATRIC" id="fig|585056.7.peg.4692"/>
<dbReference type="HOGENOM" id="CLU_047631_1_0_6"/>
<dbReference type="Proteomes" id="UP000007097">
    <property type="component" value="Chromosome"/>
</dbReference>
<dbReference type="GO" id="GO:0005737">
    <property type="term" value="C:cytoplasm"/>
    <property type="evidence" value="ECO:0007669"/>
    <property type="project" value="UniProtKB-SubCell"/>
</dbReference>
<dbReference type="GO" id="GO:0043737">
    <property type="term" value="F:deoxyribonuclease V activity"/>
    <property type="evidence" value="ECO:0007669"/>
    <property type="project" value="UniProtKB-UniRule"/>
</dbReference>
<dbReference type="GO" id="GO:0000287">
    <property type="term" value="F:magnesium ion binding"/>
    <property type="evidence" value="ECO:0007669"/>
    <property type="project" value="UniProtKB-UniRule"/>
</dbReference>
<dbReference type="GO" id="GO:0016891">
    <property type="term" value="F:RNA endonuclease activity, producing 5'-phosphomonoesters"/>
    <property type="evidence" value="ECO:0007669"/>
    <property type="project" value="TreeGrafter"/>
</dbReference>
<dbReference type="GO" id="GO:0003727">
    <property type="term" value="F:single-stranded RNA binding"/>
    <property type="evidence" value="ECO:0007669"/>
    <property type="project" value="TreeGrafter"/>
</dbReference>
<dbReference type="GO" id="GO:0006281">
    <property type="term" value="P:DNA repair"/>
    <property type="evidence" value="ECO:0007669"/>
    <property type="project" value="UniProtKB-UniRule"/>
</dbReference>
<dbReference type="CDD" id="cd06559">
    <property type="entry name" value="Endonuclease_V"/>
    <property type="match status" value="1"/>
</dbReference>
<dbReference type="FunFam" id="3.30.2170.10:FF:000001">
    <property type="entry name" value="Endonuclease V"/>
    <property type="match status" value="1"/>
</dbReference>
<dbReference type="Gene3D" id="3.30.2170.10">
    <property type="entry name" value="archaeoglobus fulgidus dsm 4304 superfamily"/>
    <property type="match status" value="1"/>
</dbReference>
<dbReference type="HAMAP" id="MF_00801">
    <property type="entry name" value="Endonuclease_5"/>
    <property type="match status" value="1"/>
</dbReference>
<dbReference type="InterPro" id="IPR007581">
    <property type="entry name" value="Endonuclease-V"/>
</dbReference>
<dbReference type="NCBIfam" id="NF008629">
    <property type="entry name" value="PRK11617.1"/>
    <property type="match status" value="1"/>
</dbReference>
<dbReference type="PANTHER" id="PTHR28511">
    <property type="entry name" value="ENDONUCLEASE V"/>
    <property type="match status" value="1"/>
</dbReference>
<dbReference type="PANTHER" id="PTHR28511:SF1">
    <property type="entry name" value="ENDONUCLEASE V"/>
    <property type="match status" value="1"/>
</dbReference>
<dbReference type="Pfam" id="PF04493">
    <property type="entry name" value="Endonuclease_5"/>
    <property type="match status" value="1"/>
</dbReference>